<sequence>MRKAEISRKTAETDISVTVDLDGTGRYDIRTGVGFFDHMMDQLARHALIDITLRCEGDLHIDDHHTVEDCGIALGQALTRALGDKRGIRRYGSFHLAMDDALVRAALDLSGRPFLVWNLPFPTEKIGSFDTELVREFFQALATHGGITLHVDLIHGVNSHHIAEAAFKAVARSLREAVEPDPRRADAIPSTKGML</sequence>
<accession>B9KPD2</accession>
<gene>
    <name evidence="1" type="primary">hisB</name>
    <name type="ordered locus">RSKD131_0565</name>
</gene>
<evidence type="ECO:0000255" key="1">
    <source>
        <dbReference type="HAMAP-Rule" id="MF_00076"/>
    </source>
</evidence>
<feature type="chain" id="PRO_1000190623" description="Imidazoleglycerol-phosphate dehydratase">
    <location>
        <begin position="1"/>
        <end position="195"/>
    </location>
</feature>
<proteinExistence type="inferred from homology"/>
<reference key="1">
    <citation type="journal article" date="2009" name="J. Bacteriol.">
        <title>Complete genome sequence of Rhodobacter sphaeroides KD131.</title>
        <authorList>
            <person name="Lim S.-K."/>
            <person name="Kim S.J."/>
            <person name="Cha S.H."/>
            <person name="Oh Y.-K."/>
            <person name="Rhee H.-J."/>
            <person name="Kim M.-S."/>
            <person name="Lee J.K."/>
        </authorList>
    </citation>
    <scope>NUCLEOTIDE SEQUENCE [LARGE SCALE GENOMIC DNA]</scope>
    <source>
        <strain>KD131 / KCTC 12085</strain>
    </source>
</reference>
<comment type="catalytic activity">
    <reaction evidence="1">
        <text>D-erythro-1-(imidazol-4-yl)glycerol 3-phosphate = 3-(imidazol-4-yl)-2-oxopropyl phosphate + H2O</text>
        <dbReference type="Rhea" id="RHEA:11040"/>
        <dbReference type="ChEBI" id="CHEBI:15377"/>
        <dbReference type="ChEBI" id="CHEBI:57766"/>
        <dbReference type="ChEBI" id="CHEBI:58278"/>
        <dbReference type="EC" id="4.2.1.19"/>
    </reaction>
</comment>
<comment type="pathway">
    <text evidence="1">Amino-acid biosynthesis; L-histidine biosynthesis; L-histidine from 5-phospho-alpha-D-ribose 1-diphosphate: step 6/9.</text>
</comment>
<comment type="subcellular location">
    <subcellularLocation>
        <location evidence="1">Cytoplasm</location>
    </subcellularLocation>
</comment>
<comment type="similarity">
    <text evidence="1">Belongs to the imidazoleglycerol-phosphate dehydratase family.</text>
</comment>
<name>HIS7_CERSK</name>
<organism>
    <name type="scientific">Cereibacter sphaeroides (strain KD131 / KCTC 12085)</name>
    <name type="common">Rhodobacter sphaeroides</name>
    <dbReference type="NCBI Taxonomy" id="557760"/>
    <lineage>
        <taxon>Bacteria</taxon>
        <taxon>Pseudomonadati</taxon>
        <taxon>Pseudomonadota</taxon>
        <taxon>Alphaproteobacteria</taxon>
        <taxon>Rhodobacterales</taxon>
        <taxon>Paracoccaceae</taxon>
        <taxon>Cereibacter</taxon>
    </lineage>
</organism>
<protein>
    <recommendedName>
        <fullName evidence="1">Imidazoleglycerol-phosphate dehydratase</fullName>
        <shortName evidence="1">IGPD</shortName>
        <ecNumber evidence="1">4.2.1.19</ecNumber>
    </recommendedName>
</protein>
<keyword id="KW-0028">Amino-acid biosynthesis</keyword>
<keyword id="KW-0963">Cytoplasm</keyword>
<keyword id="KW-0368">Histidine biosynthesis</keyword>
<keyword id="KW-0456">Lyase</keyword>
<dbReference type="EC" id="4.2.1.19" evidence="1"/>
<dbReference type="EMBL" id="CP001150">
    <property type="protein sequence ID" value="ACM00425.1"/>
    <property type="molecule type" value="Genomic_DNA"/>
</dbReference>
<dbReference type="RefSeq" id="WP_009566359.1">
    <property type="nucleotide sequence ID" value="NC_011963.1"/>
</dbReference>
<dbReference type="SMR" id="B9KPD2"/>
<dbReference type="GeneID" id="67446018"/>
<dbReference type="KEGG" id="rsk:RSKD131_0565"/>
<dbReference type="HOGENOM" id="CLU_044308_2_0_5"/>
<dbReference type="UniPathway" id="UPA00031">
    <property type="reaction ID" value="UER00011"/>
</dbReference>
<dbReference type="GO" id="GO:0005737">
    <property type="term" value="C:cytoplasm"/>
    <property type="evidence" value="ECO:0007669"/>
    <property type="project" value="UniProtKB-SubCell"/>
</dbReference>
<dbReference type="GO" id="GO:0004424">
    <property type="term" value="F:imidazoleglycerol-phosphate dehydratase activity"/>
    <property type="evidence" value="ECO:0007669"/>
    <property type="project" value="UniProtKB-UniRule"/>
</dbReference>
<dbReference type="GO" id="GO:0000105">
    <property type="term" value="P:L-histidine biosynthetic process"/>
    <property type="evidence" value="ECO:0007669"/>
    <property type="project" value="UniProtKB-UniRule"/>
</dbReference>
<dbReference type="CDD" id="cd07914">
    <property type="entry name" value="IGPD"/>
    <property type="match status" value="1"/>
</dbReference>
<dbReference type="FunFam" id="3.30.230.40:FF:000001">
    <property type="entry name" value="Imidazoleglycerol-phosphate dehydratase HisB"/>
    <property type="match status" value="1"/>
</dbReference>
<dbReference type="FunFam" id="3.30.230.40:FF:000003">
    <property type="entry name" value="Imidazoleglycerol-phosphate dehydratase HisB"/>
    <property type="match status" value="1"/>
</dbReference>
<dbReference type="Gene3D" id="3.30.230.40">
    <property type="entry name" value="Imidazole glycerol phosphate dehydratase, domain 1"/>
    <property type="match status" value="2"/>
</dbReference>
<dbReference type="HAMAP" id="MF_00076">
    <property type="entry name" value="HisB"/>
    <property type="match status" value="1"/>
</dbReference>
<dbReference type="InterPro" id="IPR038494">
    <property type="entry name" value="IGPD_sf"/>
</dbReference>
<dbReference type="InterPro" id="IPR000807">
    <property type="entry name" value="ImidazoleglycerolP_deHydtase"/>
</dbReference>
<dbReference type="InterPro" id="IPR020565">
    <property type="entry name" value="ImidazoleglycerP_deHydtase_CS"/>
</dbReference>
<dbReference type="InterPro" id="IPR020568">
    <property type="entry name" value="Ribosomal_Su5_D2-typ_SF"/>
</dbReference>
<dbReference type="NCBIfam" id="NF002109">
    <property type="entry name" value="PRK00951.1-5"/>
    <property type="match status" value="1"/>
</dbReference>
<dbReference type="NCBIfam" id="NF002111">
    <property type="entry name" value="PRK00951.2-1"/>
    <property type="match status" value="1"/>
</dbReference>
<dbReference type="NCBIfam" id="NF002114">
    <property type="entry name" value="PRK00951.2-4"/>
    <property type="match status" value="1"/>
</dbReference>
<dbReference type="PANTHER" id="PTHR23133:SF2">
    <property type="entry name" value="IMIDAZOLEGLYCEROL-PHOSPHATE DEHYDRATASE"/>
    <property type="match status" value="1"/>
</dbReference>
<dbReference type="PANTHER" id="PTHR23133">
    <property type="entry name" value="IMIDAZOLEGLYCEROL-PHOSPHATE DEHYDRATASE HIS7"/>
    <property type="match status" value="1"/>
</dbReference>
<dbReference type="Pfam" id="PF00475">
    <property type="entry name" value="IGPD"/>
    <property type="match status" value="1"/>
</dbReference>
<dbReference type="SUPFAM" id="SSF54211">
    <property type="entry name" value="Ribosomal protein S5 domain 2-like"/>
    <property type="match status" value="2"/>
</dbReference>
<dbReference type="PROSITE" id="PS00954">
    <property type="entry name" value="IGP_DEHYDRATASE_1"/>
    <property type="match status" value="1"/>
</dbReference>
<dbReference type="PROSITE" id="PS00955">
    <property type="entry name" value="IGP_DEHYDRATASE_2"/>
    <property type="match status" value="1"/>
</dbReference>